<comment type="function">
    <text evidence="1">Catalyzes the reversible conversion of ribose-5-phosphate to ribulose 5-phosphate.</text>
</comment>
<comment type="catalytic activity">
    <reaction evidence="1">
        <text>aldehydo-D-ribose 5-phosphate = D-ribulose 5-phosphate</text>
        <dbReference type="Rhea" id="RHEA:14657"/>
        <dbReference type="ChEBI" id="CHEBI:58121"/>
        <dbReference type="ChEBI" id="CHEBI:58273"/>
        <dbReference type="EC" id="5.3.1.6"/>
    </reaction>
</comment>
<comment type="pathway">
    <text evidence="1">Carbohydrate degradation; pentose phosphate pathway; D-ribose 5-phosphate from D-ribulose 5-phosphate (non-oxidative stage): step 1/1.</text>
</comment>
<comment type="subunit">
    <text evidence="1">Homodimer.</text>
</comment>
<comment type="similarity">
    <text evidence="1">Belongs to the ribose 5-phosphate isomerase family.</text>
</comment>
<keyword id="KW-0413">Isomerase</keyword>
<dbReference type="EC" id="5.3.1.6" evidence="1"/>
<dbReference type="EMBL" id="CP000001">
    <property type="protein sequence ID" value="AAU17737.1"/>
    <property type="molecule type" value="Genomic_DNA"/>
</dbReference>
<dbReference type="RefSeq" id="WP_000364534.1">
    <property type="nucleotide sequence ID" value="NC_006274.1"/>
</dbReference>
<dbReference type="SMR" id="Q63AF7"/>
<dbReference type="KEGG" id="bcz:BCE33L2521"/>
<dbReference type="PATRIC" id="fig|288681.22.peg.2951"/>
<dbReference type="UniPathway" id="UPA00115">
    <property type="reaction ID" value="UER00412"/>
</dbReference>
<dbReference type="Proteomes" id="UP000002612">
    <property type="component" value="Chromosome"/>
</dbReference>
<dbReference type="GO" id="GO:0004751">
    <property type="term" value="F:ribose-5-phosphate isomerase activity"/>
    <property type="evidence" value="ECO:0007669"/>
    <property type="project" value="UniProtKB-UniRule"/>
</dbReference>
<dbReference type="GO" id="GO:0009052">
    <property type="term" value="P:pentose-phosphate shunt, non-oxidative branch"/>
    <property type="evidence" value="ECO:0007669"/>
    <property type="project" value="UniProtKB-UniRule"/>
</dbReference>
<dbReference type="CDD" id="cd01398">
    <property type="entry name" value="RPI_A"/>
    <property type="match status" value="1"/>
</dbReference>
<dbReference type="FunFam" id="3.40.50.1360:FF:000001">
    <property type="entry name" value="Ribose-5-phosphate isomerase A"/>
    <property type="match status" value="1"/>
</dbReference>
<dbReference type="Gene3D" id="3.30.70.260">
    <property type="match status" value="1"/>
</dbReference>
<dbReference type="Gene3D" id="3.40.50.1360">
    <property type="match status" value="1"/>
</dbReference>
<dbReference type="HAMAP" id="MF_00170">
    <property type="entry name" value="Rib_5P_isom_A"/>
    <property type="match status" value="1"/>
</dbReference>
<dbReference type="InterPro" id="IPR037171">
    <property type="entry name" value="NagB/RpiA_transferase-like"/>
</dbReference>
<dbReference type="InterPro" id="IPR050262">
    <property type="entry name" value="Ribose-5P_isomerase"/>
</dbReference>
<dbReference type="InterPro" id="IPR020672">
    <property type="entry name" value="Ribose5P_isomerase_typA_subgr"/>
</dbReference>
<dbReference type="InterPro" id="IPR004788">
    <property type="entry name" value="Ribose5P_isomerase_type_A"/>
</dbReference>
<dbReference type="NCBIfam" id="NF001924">
    <property type="entry name" value="PRK00702.1"/>
    <property type="match status" value="1"/>
</dbReference>
<dbReference type="NCBIfam" id="TIGR00021">
    <property type="entry name" value="rpiA"/>
    <property type="match status" value="1"/>
</dbReference>
<dbReference type="PANTHER" id="PTHR43748">
    <property type="entry name" value="RIBOSE-5-PHOSPHATE ISOMERASE 3, CHLOROPLASTIC-RELATED"/>
    <property type="match status" value="1"/>
</dbReference>
<dbReference type="PANTHER" id="PTHR43748:SF3">
    <property type="entry name" value="RIBOSE-5-PHOSPHATE ISOMERASE 3, CHLOROPLASTIC-RELATED"/>
    <property type="match status" value="1"/>
</dbReference>
<dbReference type="Pfam" id="PF06026">
    <property type="entry name" value="Rib_5-P_isom_A"/>
    <property type="match status" value="1"/>
</dbReference>
<dbReference type="SUPFAM" id="SSF75445">
    <property type="entry name" value="D-ribose-5-phosphate isomerase (RpiA), lid domain"/>
    <property type="match status" value="1"/>
</dbReference>
<dbReference type="SUPFAM" id="SSF100950">
    <property type="entry name" value="NagB/RpiA/CoA transferase-like"/>
    <property type="match status" value="1"/>
</dbReference>
<accession>Q63AF7</accession>
<sequence length="220" mass="23993">MDLKQIAGEYAATFVKDGMKIGLGTGSTAYWTIQKLGQRVKEGLSIQAVPTSKETEALAQQLNIPLISLNDVQSLDLTIDGADEIDSNLQLIKGGGGALLREKIVASSSKELIIIIDESKVVTRLGTFPLPIEIIPFAWKQTESKIQSLGCQTTLRLKNNETFITDNNNMIIDCIFPNHIPTPSDLHKRLKMITGVVETGLFVNMTSKAIIGTKNGIQEL</sequence>
<evidence type="ECO:0000255" key="1">
    <source>
        <dbReference type="HAMAP-Rule" id="MF_00170"/>
    </source>
</evidence>
<reference key="1">
    <citation type="journal article" date="2006" name="J. Bacteriol.">
        <title>Pathogenomic sequence analysis of Bacillus cereus and Bacillus thuringiensis isolates closely related to Bacillus anthracis.</title>
        <authorList>
            <person name="Han C.S."/>
            <person name="Xie G."/>
            <person name="Challacombe J.F."/>
            <person name="Altherr M.R."/>
            <person name="Bhotika S.S."/>
            <person name="Bruce D."/>
            <person name="Campbell C.S."/>
            <person name="Campbell M.L."/>
            <person name="Chen J."/>
            <person name="Chertkov O."/>
            <person name="Cleland C."/>
            <person name="Dimitrijevic M."/>
            <person name="Doggett N.A."/>
            <person name="Fawcett J.J."/>
            <person name="Glavina T."/>
            <person name="Goodwin L.A."/>
            <person name="Hill K.K."/>
            <person name="Hitchcock P."/>
            <person name="Jackson P.J."/>
            <person name="Keim P."/>
            <person name="Kewalramani A.R."/>
            <person name="Longmire J."/>
            <person name="Lucas S."/>
            <person name="Malfatti S."/>
            <person name="McMurry K."/>
            <person name="Meincke L.J."/>
            <person name="Misra M."/>
            <person name="Moseman B.L."/>
            <person name="Mundt M."/>
            <person name="Munk A.C."/>
            <person name="Okinaka R.T."/>
            <person name="Parson-Quintana B."/>
            <person name="Reilly L.P."/>
            <person name="Richardson P."/>
            <person name="Robinson D.L."/>
            <person name="Rubin E."/>
            <person name="Saunders E."/>
            <person name="Tapia R."/>
            <person name="Tesmer J.G."/>
            <person name="Thayer N."/>
            <person name="Thompson L.S."/>
            <person name="Tice H."/>
            <person name="Ticknor L.O."/>
            <person name="Wills P.L."/>
            <person name="Brettin T.S."/>
            <person name="Gilna P."/>
        </authorList>
    </citation>
    <scope>NUCLEOTIDE SEQUENCE [LARGE SCALE GENOMIC DNA]</scope>
    <source>
        <strain>ZK / E33L</strain>
    </source>
</reference>
<name>RPIA_BACCZ</name>
<proteinExistence type="inferred from homology"/>
<feature type="chain" id="PRO_0000158385" description="Ribose-5-phosphate isomerase A">
    <location>
        <begin position="1"/>
        <end position="220"/>
    </location>
</feature>
<feature type="active site" description="Proton acceptor" evidence="1">
    <location>
        <position position="102"/>
    </location>
</feature>
<feature type="binding site" evidence="1">
    <location>
        <begin position="25"/>
        <end position="28"/>
    </location>
    <ligand>
        <name>substrate</name>
    </ligand>
</feature>
<feature type="binding site" evidence="1">
    <location>
        <begin position="80"/>
        <end position="83"/>
    </location>
    <ligand>
        <name>substrate</name>
    </ligand>
</feature>
<feature type="binding site" evidence="1">
    <location>
        <begin position="93"/>
        <end position="96"/>
    </location>
    <ligand>
        <name>substrate</name>
    </ligand>
</feature>
<feature type="binding site" evidence="1">
    <location>
        <position position="120"/>
    </location>
    <ligand>
        <name>substrate</name>
    </ligand>
</feature>
<gene>
    <name evidence="1" type="primary">rpiA</name>
    <name type="ordered locus">BCE33L2521</name>
</gene>
<organism>
    <name type="scientific">Bacillus cereus (strain ZK / E33L)</name>
    <dbReference type="NCBI Taxonomy" id="288681"/>
    <lineage>
        <taxon>Bacteria</taxon>
        <taxon>Bacillati</taxon>
        <taxon>Bacillota</taxon>
        <taxon>Bacilli</taxon>
        <taxon>Bacillales</taxon>
        <taxon>Bacillaceae</taxon>
        <taxon>Bacillus</taxon>
        <taxon>Bacillus cereus group</taxon>
    </lineage>
</organism>
<protein>
    <recommendedName>
        <fullName evidence="1">Ribose-5-phosphate isomerase A</fullName>
        <ecNumber evidence="1">5.3.1.6</ecNumber>
    </recommendedName>
    <alternativeName>
        <fullName evidence="1">Phosphoriboisomerase A</fullName>
        <shortName evidence="1">PRI</shortName>
    </alternativeName>
</protein>